<name>EOMES_XENLA</name>
<reference key="1">
    <citation type="journal article" date="1996" name="Cell">
        <title>Eomesodermin, a key early gene in Xenopus mesoderm differentiation.</title>
        <authorList>
            <person name="Ryan K."/>
            <person name="Garrett N."/>
            <person name="Mitchell A."/>
            <person name="Gurdon J.B."/>
        </authorList>
    </citation>
    <scope>NUCLEOTIDE SEQUENCE [MRNA]</scope>
    <scope>FUNCTION</scope>
    <scope>DEVELOPMENTAL STAGE</scope>
    <scope>INDUCTION</scope>
    <source>
        <tissue>Embryo</tissue>
    </source>
</reference>
<reference key="2">
    <citation type="journal article" date="1999" name="Development">
        <title>derriere: a TGF-beta family member required for posterior development in Xenopus.</title>
        <authorList>
            <person name="Sun B.I."/>
            <person name="Bush S.M."/>
            <person name="Collins-Racie L.A."/>
            <person name="LaVallie E.R."/>
            <person name="DiBlasio-Smith E.A."/>
            <person name="Wolfman N.M."/>
            <person name="McCoy J.M."/>
            <person name="Sive H.L."/>
        </authorList>
    </citation>
    <scope>INDUCTION</scope>
</reference>
<reference key="3">
    <citation type="journal article" date="2001" name="Development">
        <title>Determinants of T box protein specificity.</title>
        <authorList>
            <person name="Conlon F.L."/>
            <person name="Fairclough L."/>
            <person name="Price B.M.J."/>
            <person name="Casey E.S."/>
            <person name="Smith J.C."/>
        </authorList>
    </citation>
    <scope>FUNCTION</scope>
</reference>
<sequence>MVPGAWHSLLFTTSSASEKEENRSQRMQLGEQLLNSSTPNLPHTFYPLTGDPSSAVHSPSLEFSVGHKGQQHKKYSSGSSRGLQLDSPREAGSSSTMLSETGEGFSVAKTLPDNVRKGSPSAEEELNTAVPTSAPRYLDGSLQAASERYYLQPQGQQLQQTTTELGSPCSIFPYAPPQHSAVYPAGGAARYPPYGSMLPPAGFSPPVCPSRPQYSSGYQYSQAPGTMYSPYPPAGTGSGLSALGLPGGGAGVRAQVFLCNRPLWLKFHRHQTEMIITKQGRRMFPFLSFNITGLNPTAHYNVFVEVVLADPNHWRFQGGKWVTCGKADNNMQGNKVYVHPESPNTGAHWMRQEISFGKLKLTNNKGANNNSTQMIVLQSLHKYQPRLHIVEVSEDGVEDLNDSAKNQTFTFPENQFIAVTAYQNTDITQLKIDHNPFAKGFRDNYDSMYTASESDRLTPSPADSPRSHQIVPGTRYSVQPFFQDQFVNNLPPARYYSGERTVPQANGLLSPQTNEEVANVPPQRWFVTPVQQAAANKLDMGAYETDYSSGSLLTYGIKSLPIQTSHPMAYYPDAAFASMAGWGSRGSTYQRKMTTSLPWSSRSSPSGFSEDLLPKDKVKEEMSSSWVETPPSIKSLDSNDSGVYTGACKRRRLSPSTSSNENSPPIKCEDIGTEDYKDATKGLGYYSFYSSS</sequence>
<comment type="function">
    <text evidence="4 5">Functions as a transcriptional activator playing a crucial role during development. Functions in gastrulation, regulating mesoderm differentiation. Activates wnt8, t/bra, chrd and mix-A/mix.1 expression.</text>
</comment>
<comment type="subcellular location">
    <subcellularLocation>
        <location evidence="6">Nucleus</location>
    </subcellularLocation>
</comment>
<comment type="developmental stage">
    <text evidence="5">First expressed at or just after midblastula transition (stage 8). Maximally expressed at stage 10 as an equitorial mesoderm band, more prominently on the dorsal side and around the invaginating dorsal lip.</text>
</comment>
<comment type="induction">
    <text evidence="3 5">By activin and derriere.</text>
</comment>
<accession>P79944</accession>
<feature type="chain" id="PRO_0000184461" description="Eomesodermin">
    <location>
        <begin position="1"/>
        <end position="692"/>
    </location>
</feature>
<feature type="DNA-binding region" description="T-box" evidence="1">
    <location>
        <begin position="263"/>
        <end position="443"/>
    </location>
</feature>
<feature type="region of interest" description="Disordered" evidence="2">
    <location>
        <begin position="35"/>
        <end position="135"/>
    </location>
</feature>
<feature type="region of interest" description="Required for transcription activation">
    <location>
        <begin position="578"/>
        <end position="692"/>
    </location>
</feature>
<feature type="region of interest" description="Disordered" evidence="2">
    <location>
        <begin position="595"/>
        <end position="614"/>
    </location>
</feature>
<feature type="region of interest" description="Disordered" evidence="2">
    <location>
        <begin position="621"/>
        <end position="673"/>
    </location>
</feature>
<feature type="compositionally biased region" description="Low complexity" evidence="2">
    <location>
        <begin position="596"/>
        <end position="609"/>
    </location>
</feature>
<feature type="compositionally biased region" description="Low complexity" evidence="2">
    <location>
        <begin position="654"/>
        <end position="665"/>
    </location>
</feature>
<protein>
    <recommendedName>
        <fullName>Eomesodermin</fullName>
    </recommendedName>
</protein>
<keyword id="KW-0010">Activator</keyword>
<keyword id="KW-0217">Developmental protein</keyword>
<keyword id="KW-0221">Differentiation</keyword>
<keyword id="KW-0238">DNA-binding</keyword>
<keyword id="KW-0306">Gastrulation</keyword>
<keyword id="KW-0539">Nucleus</keyword>
<keyword id="KW-1185">Reference proteome</keyword>
<keyword id="KW-0677">Repeat</keyword>
<keyword id="KW-0804">Transcription</keyword>
<keyword id="KW-0805">Transcription regulation</keyword>
<organism>
    <name type="scientific">Xenopus laevis</name>
    <name type="common">African clawed frog</name>
    <dbReference type="NCBI Taxonomy" id="8355"/>
    <lineage>
        <taxon>Eukaryota</taxon>
        <taxon>Metazoa</taxon>
        <taxon>Chordata</taxon>
        <taxon>Craniata</taxon>
        <taxon>Vertebrata</taxon>
        <taxon>Euteleostomi</taxon>
        <taxon>Amphibia</taxon>
        <taxon>Batrachia</taxon>
        <taxon>Anura</taxon>
        <taxon>Pipoidea</taxon>
        <taxon>Pipidae</taxon>
        <taxon>Xenopodinae</taxon>
        <taxon>Xenopus</taxon>
        <taxon>Xenopus</taxon>
    </lineage>
</organism>
<gene>
    <name type="primary">eomes</name>
</gene>
<proteinExistence type="evidence at transcript level"/>
<dbReference type="EMBL" id="U75996">
    <property type="protein sequence ID" value="AAC60061.1"/>
    <property type="molecule type" value="mRNA"/>
</dbReference>
<dbReference type="RefSeq" id="NP_001081810.1">
    <property type="nucleotide sequence ID" value="NM_001088341.1"/>
</dbReference>
<dbReference type="SMR" id="P79944"/>
<dbReference type="DNASU" id="398065"/>
<dbReference type="GeneID" id="398065"/>
<dbReference type="KEGG" id="xla:398065"/>
<dbReference type="AGR" id="Xenbase:XB-GENE-865305"/>
<dbReference type="CTD" id="398065"/>
<dbReference type="Xenbase" id="XB-GENE-865305">
    <property type="gene designation" value="eomes.L"/>
</dbReference>
<dbReference type="OrthoDB" id="7442607at2759"/>
<dbReference type="Proteomes" id="UP000186698">
    <property type="component" value="Chromosome 6L"/>
</dbReference>
<dbReference type="GO" id="GO:0000785">
    <property type="term" value="C:chromatin"/>
    <property type="evidence" value="ECO:0000318"/>
    <property type="project" value="GO_Central"/>
</dbReference>
<dbReference type="GO" id="GO:0005634">
    <property type="term" value="C:nucleus"/>
    <property type="evidence" value="ECO:0000318"/>
    <property type="project" value="GO_Central"/>
</dbReference>
<dbReference type="GO" id="GO:0003677">
    <property type="term" value="F:DNA binding"/>
    <property type="evidence" value="ECO:0000314"/>
    <property type="project" value="UniProtKB"/>
</dbReference>
<dbReference type="GO" id="GO:0000981">
    <property type="term" value="F:DNA-binding transcription factor activity, RNA polymerase II-specific"/>
    <property type="evidence" value="ECO:0000318"/>
    <property type="project" value="GO_Central"/>
</dbReference>
<dbReference type="GO" id="GO:0000978">
    <property type="term" value="F:RNA polymerase II cis-regulatory region sequence-specific DNA binding"/>
    <property type="evidence" value="ECO:0000318"/>
    <property type="project" value="GO_Central"/>
</dbReference>
<dbReference type="GO" id="GO:0002302">
    <property type="term" value="P:CD8-positive, alpha-beta T cell differentiation involved in immune response"/>
    <property type="evidence" value="ECO:0000318"/>
    <property type="project" value="GO_Central"/>
</dbReference>
<dbReference type="GO" id="GO:0001706">
    <property type="term" value="P:endoderm formation"/>
    <property type="evidence" value="ECO:0000250"/>
    <property type="project" value="UniProtKB"/>
</dbReference>
<dbReference type="GO" id="GO:0001714">
    <property type="term" value="P:endodermal cell fate specification"/>
    <property type="evidence" value="ECO:0000318"/>
    <property type="project" value="GO_Central"/>
</dbReference>
<dbReference type="GO" id="GO:0001707">
    <property type="term" value="P:mesoderm formation"/>
    <property type="evidence" value="ECO:0000250"/>
    <property type="project" value="UniProtKB"/>
</dbReference>
<dbReference type="GO" id="GO:0045893">
    <property type="term" value="P:positive regulation of DNA-templated transcription"/>
    <property type="evidence" value="ECO:0000314"/>
    <property type="project" value="UniProtKB"/>
</dbReference>
<dbReference type="GO" id="GO:0006357">
    <property type="term" value="P:regulation of transcription by RNA polymerase II"/>
    <property type="evidence" value="ECO:0000318"/>
    <property type="project" value="GO_Central"/>
</dbReference>
<dbReference type="CDD" id="cd20205">
    <property type="entry name" value="T-box_TBR2"/>
    <property type="match status" value="1"/>
</dbReference>
<dbReference type="FunFam" id="2.60.40.820:FF:000004">
    <property type="entry name" value="T-box, brain 1"/>
    <property type="match status" value="1"/>
</dbReference>
<dbReference type="Gene3D" id="2.60.40.820">
    <property type="entry name" value="Transcription factor, T-box"/>
    <property type="match status" value="1"/>
</dbReference>
<dbReference type="InterPro" id="IPR008967">
    <property type="entry name" value="p53-like_TF_DNA-bd_sf"/>
</dbReference>
<dbReference type="InterPro" id="IPR032385">
    <property type="entry name" value="T-box_assoc"/>
</dbReference>
<dbReference type="InterPro" id="IPR046360">
    <property type="entry name" value="T-box_DNA-bd"/>
</dbReference>
<dbReference type="InterPro" id="IPR036960">
    <property type="entry name" value="T-box_sf"/>
</dbReference>
<dbReference type="InterPro" id="IPR001699">
    <property type="entry name" value="TF_T-box"/>
</dbReference>
<dbReference type="InterPro" id="IPR018186">
    <property type="entry name" value="TF_T-box_CS"/>
</dbReference>
<dbReference type="PANTHER" id="PTHR11267:SF13">
    <property type="entry name" value="EOMESODERMIN HOMOLOG"/>
    <property type="match status" value="1"/>
</dbReference>
<dbReference type="PANTHER" id="PTHR11267">
    <property type="entry name" value="T-BOX PROTEIN-RELATED"/>
    <property type="match status" value="1"/>
</dbReference>
<dbReference type="Pfam" id="PF00907">
    <property type="entry name" value="T-box"/>
    <property type="match status" value="1"/>
</dbReference>
<dbReference type="Pfam" id="PF16176">
    <property type="entry name" value="T-box_assoc"/>
    <property type="match status" value="1"/>
</dbReference>
<dbReference type="PRINTS" id="PR00937">
    <property type="entry name" value="TBOX"/>
</dbReference>
<dbReference type="SMART" id="SM00425">
    <property type="entry name" value="TBOX"/>
    <property type="match status" value="1"/>
</dbReference>
<dbReference type="SUPFAM" id="SSF49417">
    <property type="entry name" value="p53-like transcription factors"/>
    <property type="match status" value="1"/>
</dbReference>
<dbReference type="PROSITE" id="PS01283">
    <property type="entry name" value="TBOX_1"/>
    <property type="match status" value="1"/>
</dbReference>
<dbReference type="PROSITE" id="PS01264">
    <property type="entry name" value="TBOX_2"/>
    <property type="match status" value="1"/>
</dbReference>
<dbReference type="PROSITE" id="PS50252">
    <property type="entry name" value="TBOX_3"/>
    <property type="match status" value="1"/>
</dbReference>
<evidence type="ECO:0000255" key="1">
    <source>
        <dbReference type="PROSITE-ProRule" id="PRU00201"/>
    </source>
</evidence>
<evidence type="ECO:0000256" key="2">
    <source>
        <dbReference type="SAM" id="MobiDB-lite"/>
    </source>
</evidence>
<evidence type="ECO:0000269" key="3">
    <source>
    </source>
</evidence>
<evidence type="ECO:0000269" key="4">
    <source>
    </source>
</evidence>
<evidence type="ECO:0000269" key="5">
    <source>
    </source>
</evidence>
<evidence type="ECO:0000305" key="6"/>